<sequence>MKVLVLITLAVLGAMFVWTSAAELEERGSDQRDSPAWVKSMERIFQSEERACREWLGGCSKDADCCAHLECRKKWPYHCVWDWTVRK</sequence>
<evidence type="ECO:0000250" key="1">
    <source>
        <dbReference type="UniProtKB" id="B1P1E3"/>
    </source>
</evidence>
<evidence type="ECO:0000255" key="2"/>
<evidence type="ECO:0000269" key="3">
    <source>
    </source>
</evidence>
<evidence type="ECO:0000269" key="4">
    <source>
    </source>
</evidence>
<evidence type="ECO:0000269" key="5">
    <source>
    </source>
</evidence>
<evidence type="ECO:0000269" key="6">
    <source>
    </source>
</evidence>
<evidence type="ECO:0000303" key="7">
    <source>
    </source>
</evidence>
<evidence type="ECO:0000303" key="8">
    <source>
    </source>
</evidence>
<evidence type="ECO:0000303" key="9">
    <source>
    </source>
</evidence>
<evidence type="ECO:0000305" key="10"/>
<evidence type="ECO:0000305" key="11">
    <source>
    </source>
</evidence>
<evidence type="ECO:0000305" key="12">
    <source>
    </source>
</evidence>
<evidence type="ECO:0000305" key="13">
    <source>
    </source>
</evidence>
<evidence type="ECO:0007829" key="14">
    <source>
        <dbReference type="PDB" id="8CIQ"/>
    </source>
</evidence>
<evidence type="ECO:0007829" key="15">
    <source>
        <dbReference type="PDB" id="8CJQ"/>
    </source>
</evidence>
<comment type="function">
    <text evidence="4 6 12">Potent and selective inhibitor of hNav1.7/SCN9A (IC(50)=610 nM) (PubMed:29393892). Also shows a weak activity towards Nav1.3/SCN3A (IC(50)=7950 nM) (PubMed:29393892). In addition, inhibits voltage-gated potassium channels (Kv) in rat DRG neurons (PubMed:18581053). It does not alter the voltage dependence of activation, but it causes a small hyperpolarizing shift in the steady-state inactivations of Nav1.7/SNC9A (PubMed:29393892). Chimera experiments show that the toxin binds to the DIIS3-S4 linker (site 4) of Nav1.7/SCN9A, whereas Nav1.7/SCN9A Asp-827 residue is shown by substitution experiments to be critical for its sensitivity (PubMed:19463735, PubMed:29393892). The toxin traps the domain II voltage sensor in the closed configuration, and not in an outward position (PubMed:29393892). In vivo, shows analgesic activity in three rodent pain models (formalin-induced, acid-induced, and thermal) (PubMed:29393892).</text>
</comment>
<comment type="subcellular location">
    <subcellularLocation>
        <location evidence="3">Secreted</location>
    </subcellularLocation>
</comment>
<comment type="tissue specificity">
    <text evidence="11">Expressed by the venom gland.</text>
</comment>
<comment type="domain">
    <text evidence="1">The presence of a 'disulfide through disulfide knot' structurally defines this protein as a knottin.</text>
</comment>
<comment type="mass spectrometry">
    <text>Monoisotopic mass.</text>
</comment>
<comment type="pharmaceutical">
    <text evidence="13">Is a promising lead molecule for the development of novel therapeutics in the treatment of pain.</text>
</comment>
<comment type="miscellaneous">
    <text evidence="4 5 6">Negative results: does not inhibit TTX-resistant sodium currents on rat dorsal root ganglion (DRG) neurons (PubMed:18581053, PubMed:19463735, PubMed:29393892). Has no activity on voltage-gated potassium channel Kv2.1/KCNB1 expressed in frog oocytes (PubMed:19463735). Does not show activity towards Nav1.1/SCN1A, Nav1.2/SCN2A, Nav1.4/SCN4A, Nav1.5/SCN5A, Nav1.6/SCN8A, Nav1.8/SCN10A sodium channel (PubMed:29393892).</text>
</comment>
<comment type="similarity">
    <text evidence="10">Belongs to the neurotoxin 10 (Hwtx-1) family. 39 (Jztx-34) subfamily.</text>
</comment>
<reference key="1">
    <citation type="journal article" date="2008" name="Cell. Mol. Life Sci.">
        <title>Molecular diversity and evolution of cystine knot toxins of the tarantula Chilobrachys jingzhao.</title>
        <authorList>
            <person name="Chen J."/>
            <person name="Deng M."/>
            <person name="He Q."/>
            <person name="Meng E."/>
            <person name="Jiang L."/>
            <person name="Liao Z."/>
            <person name="Rong M."/>
            <person name="Liang S."/>
        </authorList>
    </citation>
    <scope>NUCLEOTIDE SEQUENCE [LARGE SCALE MRNA]</scope>
    <scope>FUNCTION</scope>
    <source>
        <tissue>Venom</tissue>
        <tissue>Venom gland</tissue>
    </source>
</reference>
<reference key="2">
    <citation type="journal article" date="2007" name="Proteomics">
        <title>Proteomic and peptidomic analysis of the venom from Chinese tarantula Chilobrachys jingzhao.</title>
        <authorList>
            <person name="Liao Z."/>
            <person name="Cao J."/>
            <person name="Li S."/>
            <person name="Yan X."/>
            <person name="Hu W."/>
            <person name="He Q."/>
            <person name="Chen J."/>
            <person name="Tang J."/>
            <person name="Xie J."/>
            <person name="Liang S."/>
        </authorList>
    </citation>
    <scope>PROTEIN SEQUENCE OF 51-62</scope>
    <scope>MASS SPECTROMETRY</scope>
    <scope>SUBCELLULAR LOCATION</scope>
    <source>
        <tissue>Venom</tissue>
    </source>
</reference>
<reference key="3">
    <citation type="journal article" date="2009" name="Peptides">
        <title>Expression and characterization of jingzhaotoxin-34, a novel neurotoxin from the venom of the tarantula Chilobrachys jingzhao.</title>
        <authorList>
            <person name="Chen J."/>
            <person name="Zhang Y."/>
            <person name="Rong M."/>
            <person name="Zhao L."/>
            <person name="Jiang L."/>
            <person name="Zhang D."/>
            <person name="Wang M."/>
            <person name="Xiao Y."/>
            <person name="Liang S."/>
        </authorList>
    </citation>
    <scope>FUNCTION</scope>
</reference>
<reference key="4">
    <citation type="journal article" date="2018" name="Toxins">
        <title>Selective closed-state Nav1.7 blocker JZTX-34 exhibits analgesic effects against pain.</title>
        <authorList>
            <person name="Zeng X."/>
            <person name="Li P."/>
            <person name="Chen B."/>
            <person name="Huang J."/>
            <person name="Lai R."/>
            <person name="Liu J."/>
            <person name="Rong M."/>
        </authorList>
    </citation>
    <scope>SYNTHESIS OF 51-85</scope>
    <scope>FUNCTION</scope>
</reference>
<organism>
    <name type="scientific">Chilobrachys guangxiensis</name>
    <name type="common">Chinese earth tiger tarantula</name>
    <name type="synonym">Chilobrachys jingzhao</name>
    <dbReference type="NCBI Taxonomy" id="278060"/>
    <lineage>
        <taxon>Eukaryota</taxon>
        <taxon>Metazoa</taxon>
        <taxon>Ecdysozoa</taxon>
        <taxon>Arthropoda</taxon>
        <taxon>Chelicerata</taxon>
        <taxon>Arachnida</taxon>
        <taxon>Araneae</taxon>
        <taxon>Mygalomorphae</taxon>
        <taxon>Theraphosidae</taxon>
        <taxon>Chilobrachys</taxon>
    </lineage>
</organism>
<proteinExistence type="evidence at protein level"/>
<dbReference type="EMBL" id="EU233888">
    <property type="protein sequence ID" value="ABY71707.1"/>
    <property type="molecule type" value="mRNA"/>
</dbReference>
<dbReference type="PDB" id="8CIQ">
    <property type="method" value="NMR"/>
    <property type="chains" value="A=51-85"/>
</dbReference>
<dbReference type="PDB" id="8CJP">
    <property type="method" value="NMR"/>
    <property type="chains" value="B=51-85"/>
</dbReference>
<dbReference type="PDB" id="8CJQ">
    <property type="method" value="NMR"/>
    <property type="chains" value="D=51-85"/>
</dbReference>
<dbReference type="PDB" id="8CJR">
    <property type="method" value="NMR"/>
    <property type="chains" value="C=51-85"/>
</dbReference>
<dbReference type="PDB" id="8CJS">
    <property type="method" value="NMR"/>
    <property type="chains" value="E=51-85"/>
</dbReference>
<dbReference type="PDB" id="8CJT">
    <property type="method" value="NMR"/>
    <property type="chains" value="A=51-85"/>
</dbReference>
<dbReference type="PDBsum" id="8CIQ"/>
<dbReference type="PDBsum" id="8CJP"/>
<dbReference type="PDBsum" id="8CJQ"/>
<dbReference type="PDBsum" id="8CJR"/>
<dbReference type="PDBsum" id="8CJS"/>
<dbReference type="PDBsum" id="8CJT"/>
<dbReference type="SMR" id="B1P1F7"/>
<dbReference type="ArachnoServer" id="AS000836">
    <property type="toxin name" value="mu-theraphotoxin-Cg1a"/>
</dbReference>
<dbReference type="GO" id="GO:0005576">
    <property type="term" value="C:extracellular region"/>
    <property type="evidence" value="ECO:0007669"/>
    <property type="project" value="UniProtKB-SubCell"/>
</dbReference>
<dbReference type="GO" id="GO:0008200">
    <property type="term" value="F:ion channel inhibitor activity"/>
    <property type="evidence" value="ECO:0007669"/>
    <property type="project" value="InterPro"/>
</dbReference>
<dbReference type="GO" id="GO:0015459">
    <property type="term" value="F:potassium channel regulator activity"/>
    <property type="evidence" value="ECO:0007669"/>
    <property type="project" value="UniProtKB-KW"/>
</dbReference>
<dbReference type="GO" id="GO:0017080">
    <property type="term" value="F:sodium channel regulator activity"/>
    <property type="evidence" value="ECO:0007669"/>
    <property type="project" value="UniProtKB-KW"/>
</dbReference>
<dbReference type="GO" id="GO:0090729">
    <property type="term" value="F:toxin activity"/>
    <property type="evidence" value="ECO:0007669"/>
    <property type="project" value="UniProtKB-KW"/>
</dbReference>
<dbReference type="InterPro" id="IPR011696">
    <property type="entry name" value="Huwentoxin-1"/>
</dbReference>
<dbReference type="Pfam" id="PF07740">
    <property type="entry name" value="Toxin_12"/>
    <property type="match status" value="1"/>
</dbReference>
<dbReference type="SUPFAM" id="SSF57059">
    <property type="entry name" value="omega toxin-like"/>
    <property type="match status" value="1"/>
</dbReference>
<protein>
    <recommendedName>
        <fullName evidence="10">Mu-theraphotoxin-Cg1a</fullName>
        <shortName evidence="10">Mu-TRTX-Cg1a</shortName>
    </recommendedName>
    <alternativeName>
        <fullName evidence="8 9">Jingzhaotoxin-34</fullName>
        <shortName evidence="8 9">JZTX-34</shortName>
    </alternativeName>
    <alternativeName>
        <fullName evidence="7">Peptide F6-25.51</fullName>
    </alternativeName>
</protein>
<accession>B1P1F7</accession>
<feature type="signal peptide" evidence="2">
    <location>
        <begin position="1"/>
        <end position="21"/>
    </location>
</feature>
<feature type="propeptide" id="PRO_0000379918" evidence="11">
    <location>
        <begin position="22"/>
        <end position="50"/>
    </location>
</feature>
<feature type="peptide" id="PRO_0000379919" description="Mu-theraphotoxin-Cg1a" evidence="11">
    <location>
        <begin position="51"/>
        <end position="85"/>
    </location>
</feature>
<feature type="disulfide bond" evidence="1">
    <location>
        <begin position="52"/>
        <end position="66"/>
    </location>
</feature>
<feature type="disulfide bond" evidence="1">
    <location>
        <begin position="59"/>
        <end position="71"/>
    </location>
</feature>
<feature type="disulfide bond" evidence="1">
    <location>
        <begin position="65"/>
        <end position="79"/>
    </location>
</feature>
<feature type="strand" evidence="15">
    <location>
        <begin position="55"/>
        <end position="57"/>
    </location>
</feature>
<feature type="strand" evidence="14">
    <location>
        <begin position="65"/>
        <end position="71"/>
    </location>
</feature>
<feature type="strand" evidence="14">
    <location>
        <begin position="73"/>
        <end position="76"/>
    </location>
</feature>
<feature type="strand" evidence="14">
    <location>
        <begin position="78"/>
        <end position="81"/>
    </location>
</feature>
<feature type="turn" evidence="15">
    <location>
        <begin position="82"/>
        <end position="84"/>
    </location>
</feature>
<keyword id="KW-0002">3D-structure</keyword>
<keyword id="KW-0903">Direct protein sequencing</keyword>
<keyword id="KW-1015">Disulfide bond</keyword>
<keyword id="KW-0872">Ion channel impairing toxin</keyword>
<keyword id="KW-0960">Knottin</keyword>
<keyword id="KW-0528">Neurotoxin</keyword>
<keyword id="KW-0582">Pharmaceutical</keyword>
<keyword id="KW-0632">Potassium channel impairing toxin</keyword>
<keyword id="KW-0964">Secreted</keyword>
<keyword id="KW-0732">Signal</keyword>
<keyword id="KW-0800">Toxin</keyword>
<keyword id="KW-1220">Voltage-gated potassium channel impairing toxin</keyword>
<keyword id="KW-0738">Voltage-gated sodium channel impairing toxin</keyword>
<name>JZT34_CHIGU</name>